<organism>
    <name type="scientific">Mus musculus</name>
    <name type="common">Mouse</name>
    <dbReference type="NCBI Taxonomy" id="10090"/>
    <lineage>
        <taxon>Eukaryota</taxon>
        <taxon>Metazoa</taxon>
        <taxon>Chordata</taxon>
        <taxon>Craniata</taxon>
        <taxon>Vertebrata</taxon>
        <taxon>Euteleostomi</taxon>
        <taxon>Mammalia</taxon>
        <taxon>Eutheria</taxon>
        <taxon>Euarchontoglires</taxon>
        <taxon>Glires</taxon>
        <taxon>Rodentia</taxon>
        <taxon>Myomorpha</taxon>
        <taxon>Muroidea</taxon>
        <taxon>Muridae</taxon>
        <taxon>Murinae</taxon>
        <taxon>Mus</taxon>
        <taxon>Mus</taxon>
    </lineage>
</organism>
<evidence type="ECO:0000250" key="1"/>
<evidence type="ECO:0000250" key="2">
    <source>
        <dbReference type="UniProtKB" id="Q15772"/>
    </source>
</evidence>
<evidence type="ECO:0000250" key="3">
    <source>
        <dbReference type="UniProtKB" id="Q63638"/>
    </source>
</evidence>
<evidence type="ECO:0000255" key="4">
    <source>
        <dbReference type="PROSITE-ProRule" id="PRU00114"/>
    </source>
</evidence>
<evidence type="ECO:0000255" key="5">
    <source>
        <dbReference type="PROSITE-ProRule" id="PRU00159"/>
    </source>
</evidence>
<evidence type="ECO:0000255" key="6">
    <source>
        <dbReference type="PROSITE-ProRule" id="PRU00316"/>
    </source>
</evidence>
<evidence type="ECO:0000256" key="7">
    <source>
        <dbReference type="SAM" id="MobiDB-lite"/>
    </source>
</evidence>
<evidence type="ECO:0000269" key="8">
    <source>
    </source>
</evidence>
<evidence type="ECO:0000269" key="9">
    <source>
    </source>
</evidence>
<evidence type="ECO:0000269" key="10">
    <source>
    </source>
</evidence>
<evidence type="ECO:0000303" key="11">
    <source>
    </source>
</evidence>
<evidence type="ECO:0000303" key="12">
    <source>
    </source>
</evidence>
<evidence type="ECO:0000303" key="13">
    <source>
    </source>
</evidence>
<evidence type="ECO:0000303" key="14">
    <source>
    </source>
</evidence>
<evidence type="ECO:0000305" key="15"/>
<evidence type="ECO:0007744" key="16">
    <source>
    </source>
</evidence>
<evidence type="ECO:0007744" key="17">
    <source>
    </source>
</evidence>
<evidence type="ECO:0007744" key="18">
    <source>
    </source>
</evidence>
<proteinExistence type="evidence at protein level"/>
<keyword id="KW-0877">Alternative promoter usage</keyword>
<keyword id="KW-0025">Alternative splicing</keyword>
<keyword id="KW-0067">ATP-binding</keyword>
<keyword id="KW-0221">Differentiation</keyword>
<keyword id="KW-1015">Disulfide bond</keyword>
<keyword id="KW-0393">Immunoglobulin domain</keyword>
<keyword id="KW-0418">Kinase</keyword>
<keyword id="KW-0488">Methylation</keyword>
<keyword id="KW-0547">Nucleotide-binding</keyword>
<keyword id="KW-0539">Nucleus</keyword>
<keyword id="KW-0597">Phosphoprotein</keyword>
<keyword id="KW-1185">Reference proteome</keyword>
<keyword id="KW-0677">Repeat</keyword>
<keyword id="KW-0723">Serine/threonine-protein kinase</keyword>
<keyword id="KW-0808">Transferase</keyword>
<sequence length="3262" mass="354343">MQKARGTRGEDAGTRAPPSPGVPPKRAKVGAGRGVLVTGDGAGAPVFLRPLKNAAVCAGSDVRLRVVVSGTPQPSLSWFRDGQLLPPPAPEPSCLWLRSCGAQDAGVYSCSAQNERGQASCEAVLTVLEVRDSETAEDDISDVPGTQRLELRDDRAFSTPTGGSDTLVGTSLDTPPTSVTGTSEEQVSWWGSGQTVLEQEAGSGGGTRPLPGSPRQAQTTGAGPRHLGVEPLVRASRANLVGASWGSEDSLSVASDLYGSAFSLYRGRALSIHVSIPPSGLHREEPDLQPQPASDALRPRPALPPPSKSALLPPPSPRVGKRALPGPSTQPPATPTSPHRRAQEPSLPEDITTTEEKRGKKPKSSGPSLAGTVESRPQTPLSEASGRLSALGRSPRLVRAGSRILDKLQFFEERRRSLERSDSPPAPLRPWVPLRKARSLEQPKSEGGAAWGTPEASQEELRSPRGSVAERRRLFQQKAASLDERTRQRSATSDLELRFAQELGRIRRSTSREELVRSHESLRATLQRAPSPREPGEPPLFSRPSTPKTSRAVSPAATQPPPPSGAGKSGDEPGRPRSRGPVGRTEPGEGPQQEIKRRDQFPLTRSRAIQECRSPVPPYTADPPESRTKAPSGRKREPPAQAVRFLPWATPGVEDSVLPQTLEKNRAGPEAEKRLRRGPEEDGPWGPWDRRGTRSQGKGRRARPTSPELESSDDSYVSAGEEPLEAPVFEIPLQNMVVAPGADVLLKCIITANPPPQVSWKKDGSMLHSEGRLLIRAEGERHTLLLREAQAADAGSYTATATNELGQATCASSLAVRPGGSTSPFSSPITSDEEYLSPPEEFPEPGETWPRTPTMKLSPSQDHDSSDSSSKAPPTFKVSLMDQSVREGQDVIMSIRVQGEPKPVVSWLRNRQPVRPDQRRFAEEAEGGLCRLRILAAERGDAGFYTCKAVNEYGARQCEARLEVRAHPESRSLAVLAPLQDVDVGAGEMALFECLVAGPADVEVDWLCRGRLLQPALLKCKMHFDGRKCKLLLTSVHEDDSGVYTCKLSTAKDELTCSARLTVRPSLAPLFTRLLEDVEVLEGRAARLDCKISGTPPPSVTWTHFGHPVNEGDNLRLRQDGGLHSLHIARVGSEDEGLYEVSATNTHGQAHCSAQLYVEEPRTAASGPSSKLEKMPSIPEEPEHGDLERLSIPDFLRPLQDLEVGLAKEAMLECQVTGLPYPTISWFHNGHRIQSSDDRRMTQYRDIHRLVFPAVGPQHAGVYKSVIANKLGKAACYAHLYVTDVVPGPPDGAPEVVAVTGRMVTLSWNPPRSLDMAIDPDSLTYTVQHQVLGSDQWTALVTGLREPAWAATGLKKGIQHIFRVLSSSGKSSSKPSAPSEPVQLLEHGPPLEEAPAVLDKQDIVYVVEGQPACVTVTFNHVEAQVVWRSCRGALLEARTGVYELSQPDDDQYCLRICRVSRRDLGPLTCSARNRHGTKACSVTLELAEAPRFESIMEDVEVGPGETARFAVVVEGKPLPDIMWYKDEVLLAESNHVSFVYEENECSLVLLSAGSQDGGVYTCTARNLAGEVSCKAELSVLSAQTAMEVEGVGEDEEHRGRRLSDYYDIHQEIGRGAFSYLRRVVERSSGLEFAAKFIPSQAKPKASARREARLLARLQHGCVLYFHEAFERRRGLVIVTELCTEELLERMARKPTVCESETRTYMRQVLEGICYLHQSHVLHLDVKPENLLVWDGAGGEEQVRICDFGNAQELTPGEPQYCQYGTPEFVAPEIVNQSPVSGVTDIWPVGVVAFLCLTGISPFVGENDRTTLMNIRNYNVAFEETTFLSLSREARGFLIKVLVQDRLRPTAEETLEHPWFKTEAKGAEVSTDHLKLFLSRRRWQRSQISYKCHLVLRPIPELLRAPPERVWVAMPRRQPPSGGLSSSSDSEEEELEELPSVPRPLQPEFSGSRVSLTDIPTEDEALGTPEAGAATPMDWQEQERTPSKDQEAPSPEALPSPGQESPDGPSPRRPELRRGSSAESALPRVGSREPGRSLHKAASVELPQRRSPSPGATRLTRGGLGEGEYAQRLQALRQRLLRGGPEDGKVSGLRGPLLESLGGRARDPRMARAASSEAAPHHQPPPESRGLQKSSSFSQGEAEPRGRHRRAGAPLEIPVARLGARRLQESPSLSALSETQPPSPARPSVPKLSITKSPEPSAVTSRDSPQPPEPQPVPEKVPEPKPEPVRAAKPAQPPLALQMPTQPLTPYAQIMQSLQLSSPTLSPQDPAVPPSEPKPHAAVFARVASPPPGVSEKRVPSARTPPVLAEKARVPTVPPRPGSSLSGSIENLESEAVFEAKFKRSRESPLSRGLRLLSRSRSEERGPFRGAEDDGIYRPSPAGTPLELVRRPERSRSVQDLRVAGEPGLVRRLSLSLSQKLRRTPPGQRHPAWESRSGDGESSEGGSSARASPVLAVRRRLSSTLERLSSRLQRSGSSEDSGGASGRSTPLFGRLRRATSEGESLRRLGVPHNQLGSQTGATTPSAESLGSEASGTSGSSAPGESRSRHRWGLSRLRKDKGLSQPNLSSSVQEDLGHQYVPSESDFPPVFHIKLKDQVLLEGEAATLLCLPAACPAPRISWMKDKQSLRSEPSVVIVSCKDGRQLLSIPRAGKRHAGLYECSATNVLGSITSSCTVAVARIPGKLAPPEVPQTYHDTALVVWKPGDGRAPCTYTLERRVDGESVWHPVSSGIPDCYYNVTQLPVGVTVRFRVACSNRAGQGPFSNPSEKVFIRGTPDSPAQPAAAPRDAPVTSGPTRAPPPDSPTSLAPTPALAPPASQASTLSPSTSSMSANQALSSLKAVGPPPATPPRKHRGLLATQQAEPSPPSIVVTPSEPRSFVPDTGTLTPTSSPQGVKPAPSSTSLYMVTSFVSAPPAPQAPAPEPPPEPTKVTVRSLSPAKEVVSSPTPESTTLRQGPPQKPYTFLEEKARGRFGVVRSCRENATGRTFVAKIVPYAAEGKRRVLQEYEVLRTLHHERLMSLHEAYITPRYLVLIAESCGNRELLCGLSDRFRYSEDDVATYVVQLLQGLDYLHGHHVLHLDIKPDNLLLAADNALKIVDFGSAQPYNPQALKPLGHRTGTLEFMAPEMVKGDPIGSATDIWGAGVLTYIMLSGYSPFYEPDPQETEARIVGGRFDAFQLYPNTSQSATLFLRKVLSVHPWSRPSLQDCLAHPWLQDAYLMKLRRQTLTFTTNRLKEFLGEQRRRRAEAATRHKVLLRSYPGSP</sequence>
<comment type="function">
    <text>Isoform 3 may have a role in regulating the growth and differentiation of arterial smooth muscle cells.</text>
</comment>
<comment type="catalytic activity">
    <reaction>
        <text>L-seryl-[protein] + ATP = O-phospho-L-seryl-[protein] + ADP + H(+)</text>
        <dbReference type="Rhea" id="RHEA:17989"/>
        <dbReference type="Rhea" id="RHEA-COMP:9863"/>
        <dbReference type="Rhea" id="RHEA-COMP:11604"/>
        <dbReference type="ChEBI" id="CHEBI:15378"/>
        <dbReference type="ChEBI" id="CHEBI:29999"/>
        <dbReference type="ChEBI" id="CHEBI:30616"/>
        <dbReference type="ChEBI" id="CHEBI:83421"/>
        <dbReference type="ChEBI" id="CHEBI:456216"/>
        <dbReference type="EC" id="2.7.11.1"/>
    </reaction>
</comment>
<comment type="catalytic activity">
    <reaction>
        <text>L-threonyl-[protein] + ATP = O-phospho-L-threonyl-[protein] + ADP + H(+)</text>
        <dbReference type="Rhea" id="RHEA:46608"/>
        <dbReference type="Rhea" id="RHEA-COMP:11060"/>
        <dbReference type="Rhea" id="RHEA-COMP:11605"/>
        <dbReference type="ChEBI" id="CHEBI:15378"/>
        <dbReference type="ChEBI" id="CHEBI:30013"/>
        <dbReference type="ChEBI" id="CHEBI:30616"/>
        <dbReference type="ChEBI" id="CHEBI:61977"/>
        <dbReference type="ChEBI" id="CHEBI:456216"/>
        <dbReference type="EC" id="2.7.11.1"/>
    </reaction>
</comment>
<comment type="subunit">
    <text evidence="2">Interacts with MTM1 (By similarity). Isoform 3 is found as a monomer or homodimer.</text>
</comment>
<comment type="subcellular location">
    <molecule>Isoform 3</molecule>
    <subcellularLocation>
        <location>Nucleus</location>
    </subcellularLocation>
</comment>
<comment type="alternative products">
    <event type="alternative promoter"/>
    <event type="alternative splicing"/>
    <isoform>
        <id>Q62407-1</id>
        <name>1</name>
        <name>SPEG-beta</name>
        <sequence type="displayed"/>
    </isoform>
    <isoform>
        <id>Q62407-2</id>
        <name>2</name>
        <name>BPEG</name>
        <sequence type="described" ref="VSP_018265 VSP_018266 VSP_018267 VSP_018268"/>
    </isoform>
    <isoform>
        <id>Q62407-3</id>
        <name>3</name>
        <name>APEG1</name>
        <sequence type="described" ref="VSP_018264 VSP_018267"/>
    </isoform>
    <isoform>
        <id>Q62407-4</id>
        <name>4</name>
        <name>SPEG-alpha</name>
        <sequence type="described" ref="VSP_018264"/>
    </isoform>
</comment>
<comment type="tissue specificity">
    <text evidence="8 9 10">Isoform 1 is preferentially expressed in striated muscle. Non-kinase form such as isoform 3 is predominantly expressed in the aorta. Isoform 3 appears to be expressed only in highly differentiated ASMC in normal vessel walls and down-regulated in dedifferentiated ASMC in vivo. In response to vascular injuries ASMC dedifferentiate and change from a quiescent and contractile phenotype to a proliferative and synthetic phenotype. This proliferation of vascular smooth muscle cells is one of the most prominent features of atherosclerosis. Isoform 1 and isoform 4 are expressed in cardiomyocytes of the developing heart.</text>
</comment>
<comment type="induction">
    <text evidence="10">Isoform 3 is quickly down-regulated in response to vascular injury, when ASMC cells change from a quiescent to a proliferative phenotype.</text>
</comment>
<comment type="PTM">
    <text evidence="8">May be autophosphorylated.</text>
</comment>
<comment type="disruption phenotype">
    <text evidence="9">Mice lacking SPEG demonstrate dilation of right and left atria and ventricles, cardiac hypertrophy, myofibril degeneration, and a marked decrease in cardiac function. Moreover, mutant mice exhibit significant neonatal mortality.</text>
</comment>
<comment type="miscellaneous">
    <text>Expression is under the tight control of the locus control region (LCRs).</text>
</comment>
<comment type="miscellaneous">
    <molecule>Isoform 3</molecule>
    <text evidence="15">Produced by alternative promoter usage.</text>
</comment>
<comment type="miscellaneous">
    <molecule>Isoform 4</molecule>
    <text evidence="15">Produced by alternative promoter usage.</text>
</comment>
<comment type="similarity">
    <text evidence="15">Belongs to the protein kinase superfamily. CAMK Ser/Thr protein kinase family.</text>
</comment>
<comment type="sequence caution" evidence="15">
    <conflict type="frameshift">
        <sequence resource="EMBL-CDS" id="AAG34791"/>
    </conflict>
</comment>
<feature type="chain" id="PRO_0000072667" description="Striated muscle-specific serine/threonine-protein kinase">
    <location>
        <begin position="1"/>
        <end position="3262"/>
    </location>
</feature>
<feature type="domain" description="Ig-like 1">
    <location>
        <begin position="45"/>
        <end position="126"/>
    </location>
</feature>
<feature type="domain" description="Ig-like 2">
    <location>
        <begin position="727"/>
        <end position="815"/>
    </location>
</feature>
<feature type="domain" description="Ig-like 3">
    <location>
        <begin position="874"/>
        <end position="963"/>
    </location>
</feature>
<feature type="domain" description="Ig-like 4">
    <location>
        <begin position="968"/>
        <end position="1062"/>
    </location>
</feature>
<feature type="domain" description="Ig-like 5">
    <location>
        <begin position="1069"/>
        <end position="1157"/>
    </location>
</feature>
<feature type="domain" description="Ig-like 6">
    <location>
        <begin position="1193"/>
        <end position="1283"/>
    </location>
</feature>
<feature type="domain" description="Fibronectin type-III 1" evidence="6">
    <location>
        <begin position="1290"/>
        <end position="1387"/>
    </location>
</feature>
<feature type="domain" description="Ig-like 7">
    <location>
        <begin position="1389"/>
        <end position="1485"/>
    </location>
</feature>
<feature type="domain" description="Ig-like 8">
    <location>
        <begin position="1490"/>
        <end position="1578"/>
    </location>
</feature>
<feature type="domain" description="Protein kinase 1" evidence="5">
    <location>
        <begin position="1606"/>
        <end position="1859"/>
    </location>
</feature>
<feature type="domain" description="Ig-like 9">
    <location>
        <begin position="2586"/>
        <end position="2676"/>
    </location>
</feature>
<feature type="domain" description="Fibronectin type-III 2" evidence="6">
    <location>
        <begin position="2683"/>
        <end position="2777"/>
    </location>
</feature>
<feature type="domain" description="Fibronectin type-III 3" evidence="6">
    <location>
        <begin position="2865"/>
        <end position="2968"/>
    </location>
</feature>
<feature type="domain" description="Protein kinase 2" evidence="5">
    <location>
        <begin position="2946"/>
        <end position="3213"/>
    </location>
</feature>
<feature type="region of interest" description="Disordered" evidence="7">
    <location>
        <begin position="1"/>
        <end position="33"/>
    </location>
</feature>
<feature type="region of interest" description="Disordered" evidence="7">
    <location>
        <begin position="155"/>
        <end position="185"/>
    </location>
</feature>
<feature type="region of interest" description="Disordered" evidence="7">
    <location>
        <begin position="198"/>
        <end position="226"/>
    </location>
</feature>
<feature type="region of interest" description="Disordered" evidence="7">
    <location>
        <begin position="280"/>
        <end position="720"/>
    </location>
</feature>
<feature type="region of interest" description="Disordered" evidence="7">
    <location>
        <begin position="814"/>
        <end position="875"/>
    </location>
</feature>
<feature type="region of interest" description="Disordered" evidence="7">
    <location>
        <begin position="1162"/>
        <end position="1185"/>
    </location>
</feature>
<feature type="region of interest" description="Disordered" evidence="7">
    <location>
        <begin position="1913"/>
        <end position="2571"/>
    </location>
</feature>
<feature type="region of interest" description="Disordered" evidence="7">
    <location>
        <begin position="2756"/>
        <end position="2832"/>
    </location>
</feature>
<feature type="region of interest" description="Disordered" evidence="7">
    <location>
        <begin position="2857"/>
        <end position="2899"/>
    </location>
</feature>
<feature type="region of interest" description="Disordered" evidence="7">
    <location>
        <begin position="2912"/>
        <end position="2960"/>
    </location>
</feature>
<feature type="compositionally biased region" description="Polar residues" evidence="7">
    <location>
        <begin position="158"/>
        <end position="185"/>
    </location>
</feature>
<feature type="compositionally biased region" description="Pro residues" evidence="7">
    <location>
        <begin position="301"/>
        <end position="317"/>
    </location>
</feature>
<feature type="compositionally biased region" description="Basic and acidic residues" evidence="7">
    <location>
        <begin position="404"/>
        <end position="422"/>
    </location>
</feature>
<feature type="compositionally biased region" description="Basic and acidic residues" evidence="7">
    <location>
        <begin position="459"/>
        <end position="473"/>
    </location>
</feature>
<feature type="compositionally biased region" description="Basic and acidic residues" evidence="7">
    <location>
        <begin position="510"/>
        <end position="522"/>
    </location>
</feature>
<feature type="compositionally biased region" description="Polar residues" evidence="7">
    <location>
        <begin position="543"/>
        <end position="552"/>
    </location>
</feature>
<feature type="compositionally biased region" description="Basic and acidic residues" evidence="7">
    <location>
        <begin position="624"/>
        <end position="638"/>
    </location>
</feature>
<feature type="compositionally biased region" description="Basic and acidic residues" evidence="7">
    <location>
        <begin position="663"/>
        <end position="680"/>
    </location>
</feature>
<feature type="compositionally biased region" description="Polar residues" evidence="7">
    <location>
        <begin position="820"/>
        <end position="830"/>
    </location>
</feature>
<feature type="compositionally biased region" description="Low complexity" evidence="7">
    <location>
        <begin position="1918"/>
        <end position="1927"/>
    </location>
</feature>
<feature type="compositionally biased region" description="Basic and acidic residues" evidence="7">
    <location>
        <begin position="1980"/>
        <end position="1990"/>
    </location>
</feature>
<feature type="compositionally biased region" description="Basic and acidic residues" evidence="7">
    <location>
        <begin position="2009"/>
        <end position="2019"/>
    </location>
</feature>
<feature type="compositionally biased region" description="Low complexity" evidence="7">
    <location>
        <begin position="2069"/>
        <end position="2081"/>
    </location>
</feature>
<feature type="compositionally biased region" description="Polar residues" evidence="7">
    <location>
        <begin position="2168"/>
        <end position="2179"/>
    </location>
</feature>
<feature type="compositionally biased region" description="Polar residues" evidence="7">
    <location>
        <begin position="2193"/>
        <end position="2207"/>
    </location>
</feature>
<feature type="compositionally biased region" description="Pro residues" evidence="7">
    <location>
        <begin position="2208"/>
        <end position="2218"/>
    </location>
</feature>
<feature type="compositionally biased region" description="Basic and acidic residues" evidence="7">
    <location>
        <begin position="2219"/>
        <end position="2229"/>
    </location>
</feature>
<feature type="compositionally biased region" description="Low complexity" evidence="7">
    <location>
        <begin position="2230"/>
        <end position="2268"/>
    </location>
</feature>
<feature type="compositionally biased region" description="Basic and acidic residues" evidence="7">
    <location>
        <begin position="2337"/>
        <end position="2348"/>
    </location>
</feature>
<feature type="compositionally biased region" description="Low complexity" evidence="7">
    <location>
        <begin position="2349"/>
        <end position="2358"/>
    </location>
</feature>
<feature type="compositionally biased region" description="Basic and acidic residues" evidence="7">
    <location>
        <begin position="2359"/>
        <end position="2375"/>
    </location>
</feature>
<feature type="compositionally biased region" description="Basic and acidic residues" evidence="7">
    <location>
        <begin position="2387"/>
        <end position="2398"/>
    </location>
</feature>
<feature type="compositionally biased region" description="Low complexity" evidence="7">
    <location>
        <begin position="2461"/>
        <end position="2487"/>
    </location>
</feature>
<feature type="compositionally biased region" description="Polar residues" evidence="7">
    <location>
        <begin position="2513"/>
        <end position="2523"/>
    </location>
</feature>
<feature type="compositionally biased region" description="Low complexity" evidence="7">
    <location>
        <begin position="2524"/>
        <end position="2543"/>
    </location>
</feature>
<feature type="compositionally biased region" description="Basic residues" evidence="7">
    <location>
        <begin position="2546"/>
        <end position="2557"/>
    </location>
</feature>
<feature type="compositionally biased region" description="Polar residues" evidence="7">
    <location>
        <begin position="2562"/>
        <end position="2571"/>
    </location>
</feature>
<feature type="compositionally biased region" description="Low complexity" evidence="7">
    <location>
        <begin position="2775"/>
        <end position="2789"/>
    </location>
</feature>
<feature type="compositionally biased region" description="Low complexity" evidence="7">
    <location>
        <begin position="2803"/>
        <end position="2831"/>
    </location>
</feature>
<feature type="compositionally biased region" description="Polar residues" evidence="7">
    <location>
        <begin position="2883"/>
        <end position="2899"/>
    </location>
</feature>
<feature type="compositionally biased region" description="Pro residues" evidence="7">
    <location>
        <begin position="2913"/>
        <end position="2927"/>
    </location>
</feature>
<feature type="compositionally biased region" description="Polar residues" evidence="7">
    <location>
        <begin position="2943"/>
        <end position="2953"/>
    </location>
</feature>
<feature type="active site" description="Proton acceptor" evidence="1">
    <location>
        <position position="1724"/>
    </location>
</feature>
<feature type="active site" description="Proton acceptor" evidence="1">
    <location>
        <position position="3080"/>
    </location>
</feature>
<feature type="binding site" evidence="5">
    <location>
        <begin position="1612"/>
        <end position="1620"/>
    </location>
    <ligand>
        <name>ATP</name>
        <dbReference type="ChEBI" id="CHEBI:30616"/>
    </ligand>
</feature>
<feature type="binding site" evidence="5">
    <location>
        <position position="1635"/>
    </location>
    <ligand>
        <name>ATP</name>
        <dbReference type="ChEBI" id="CHEBI:30616"/>
    </ligand>
</feature>
<feature type="modified residue" description="Omega-N-methylarginine" evidence="18">
    <location>
        <position position="33"/>
    </location>
</feature>
<feature type="modified residue" description="Phosphoserine" evidence="3">
    <location>
        <position position="141"/>
    </location>
</feature>
<feature type="modified residue" description="Phosphoserine" evidence="3">
    <location>
        <position position="368"/>
    </location>
</feature>
<feature type="modified residue" description="Phosphoserine" evidence="17">
    <location>
        <position position="375"/>
    </location>
</feature>
<feature type="modified residue" description="Phosphothreonine" evidence="17">
    <location>
        <position position="379"/>
    </location>
</feature>
<feature type="modified residue" description="Phosphoserine" evidence="17">
    <location>
        <position position="382"/>
    </location>
</feature>
<feature type="modified residue" description="Phosphoserine" evidence="3">
    <location>
        <position position="385"/>
    </location>
</feature>
<feature type="modified residue" description="Phosphoserine" evidence="3">
    <location>
        <position position="423"/>
    </location>
</feature>
<feature type="modified residue" description="Phosphothreonine" evidence="17">
    <location>
        <position position="453"/>
    </location>
</feature>
<feature type="modified residue" description="Phosphoserine" evidence="17">
    <location>
        <position position="457"/>
    </location>
</feature>
<feature type="modified residue" description="Phosphoserine" evidence="3">
    <location>
        <position position="463"/>
    </location>
</feature>
<feature type="modified residue" description="Phosphoserine" evidence="2">
    <location>
        <position position="493"/>
    </location>
</feature>
<feature type="modified residue" description="Phosphoserine" evidence="3">
    <location>
        <position position="511"/>
    </location>
</feature>
<feature type="modified residue" description="Phosphoserine" evidence="17">
    <location>
        <position position="531"/>
    </location>
</feature>
<feature type="modified residue" description="Phosphoserine" evidence="3">
    <location>
        <position position="554"/>
    </location>
</feature>
<feature type="modified residue" description="Phosphoserine" evidence="17">
    <location>
        <position position="1133"/>
    </location>
</feature>
<feature type="modified residue" description="Phosphoserine" evidence="16 17">
    <location>
        <position position="1177"/>
    </location>
</feature>
<feature type="modified residue" description="Phosphoserine" evidence="17">
    <location>
        <position position="1993"/>
    </location>
</feature>
<feature type="modified residue" description="Phosphoserine" evidence="17">
    <location>
        <position position="2004"/>
    </location>
</feature>
<feature type="modified residue" description="Phosphoserine" evidence="17">
    <location>
        <position position="2019"/>
    </location>
</feature>
<feature type="modified residue" description="Phosphoserine" evidence="17">
    <location>
        <position position="2020"/>
    </location>
</feature>
<feature type="modified residue" description="Phosphoserine" evidence="3">
    <location>
        <position position="2042"/>
    </location>
</feature>
<feature type="modified residue" description="Asymmetric dimethylarginine; alternate" evidence="18">
    <location>
        <position position="2060"/>
    </location>
</feature>
<feature type="modified residue" description="Omega-N-methylarginine; alternate" evidence="18">
    <location>
        <position position="2060"/>
    </location>
</feature>
<feature type="modified residue" description="Phosphoserine" evidence="3">
    <location>
        <position position="2114"/>
    </location>
</feature>
<feature type="modified residue" description="Phosphoserine" evidence="3">
    <location>
        <position position="2135"/>
    </location>
</feature>
<feature type="modified residue" description="Omega-N-methylarginine" evidence="18">
    <location>
        <position position="2144"/>
    </location>
</feature>
<feature type="modified residue" description="Phosphoserine" evidence="3">
    <location>
        <position position="2182"/>
    </location>
</feature>
<feature type="modified residue" description="Phosphoserine" evidence="3">
    <location>
        <position position="2207"/>
    </location>
</feature>
<feature type="modified residue" description="Phosphoserine" evidence="17">
    <location>
        <position position="2379"/>
    </location>
</feature>
<feature type="modified residue" description="Phosphothreonine" evidence="17">
    <location>
        <position position="2383"/>
    </location>
</feature>
<feature type="modified residue" description="Phosphoserine" evidence="3">
    <location>
        <position position="2413"/>
    </location>
</feature>
<feature type="modified residue" description="Phosphoserine" evidence="3">
    <location>
        <position position="2417"/>
    </location>
</feature>
<feature type="modified residue" description="Phosphoserine" evidence="3">
    <location>
        <position position="2441"/>
    </location>
</feature>
<feature type="modified residue" description="Phosphoserine" evidence="17">
    <location>
        <position position="2442"/>
    </location>
</feature>
<feature type="modified residue" description="Phosphoserine" evidence="17">
    <location>
        <position position="2447"/>
    </location>
</feature>
<feature type="modified residue" description="Phosphoserine" evidence="17">
    <location>
        <position position="2451"/>
    </location>
</feature>
<feature type="modified residue" description="Phosphoserine" evidence="17">
    <location>
        <position position="2524"/>
    </location>
</feature>
<feature type="modified residue" description="Phosphoserine" evidence="17">
    <location>
        <position position="2527"/>
    </location>
</feature>
<feature type="modified residue" description="Phosphoserine" evidence="3">
    <location>
        <position position="2562"/>
    </location>
</feature>
<feature type="modified residue" description="Phosphothreonine" evidence="17">
    <location>
        <position position="2774"/>
    </location>
</feature>
<feature type="modified residue" description="Phosphoserine" evidence="3">
    <location>
        <position position="2777"/>
    </location>
</feature>
<feature type="modified residue" description="Phosphoserine" evidence="17">
    <location>
        <position position="2944"/>
    </location>
</feature>
<feature type="disulfide bond" evidence="4">
    <location>
        <begin position="994"/>
        <end position="1046"/>
    </location>
</feature>
<feature type="disulfide bond" evidence="4">
    <location>
        <begin position="1413"/>
        <end position="1469"/>
    </location>
</feature>
<feature type="disulfide bond" evidence="4">
    <location>
        <begin position="2608"/>
        <end position="2660"/>
    </location>
</feature>
<feature type="splice variant" id="VSP_018264" description="In isoform 3 and isoform 4." evidence="11 14">
    <location>
        <begin position="1"/>
        <end position="854"/>
    </location>
</feature>
<feature type="splice variant" id="VSP_018265" description="In isoform 2." evidence="11 12 13">
    <location>
        <begin position="1"/>
        <end position="106"/>
    </location>
</feature>
<feature type="splice variant" id="VSP_018266" description="In isoform 2." evidence="11 12 13">
    <original>VYSCSAQNERGQASCEAVLTVLEVR</original>
    <variation>MKKLWVKKRFQKTGHSRRAFGRLTH</variation>
    <location>
        <begin position="107"/>
        <end position="131"/>
    </location>
</feature>
<feature type="splice variant" id="VSP_018267" description="In isoform 2 and isoform 3." evidence="11 12 13 14">
    <original>AH</original>
    <variation>GE</variation>
    <location>
        <begin position="966"/>
        <end position="967"/>
    </location>
</feature>
<feature type="splice variant" id="VSP_018268" description="In isoform 2." evidence="11 12 13">
    <location>
        <begin position="968"/>
        <end position="3262"/>
    </location>
</feature>
<feature type="sequence conflict" description="In Ref. 3; BAC65770." evidence="15" ref="3">
    <original>L</original>
    <variation>R</variation>
    <location>
        <position position="3237"/>
    </location>
</feature>
<gene>
    <name type="primary">Speg</name>
    <name type="synonym">Apeg1</name>
    <name type="synonym">Kiaa1297</name>
</gene>
<reference key="1">
    <citation type="journal article" date="1996" name="J. Biol. Chem.">
        <title>APEG-1, a novel gene preferentially expressed in aortic smooth muscle cells, is down-regulated by vascular injury.</title>
        <authorList>
            <person name="Hsieh C.-M."/>
            <person name="Yoshizumi M."/>
            <person name="Endege W.O."/>
            <person name="Kho C.-J."/>
            <person name="Jain M.K."/>
            <person name="Kashiki S."/>
            <person name="de Los Santos R."/>
            <person name="Lee W.-S."/>
            <person name="Perrella M.A."/>
            <person name="Lee M.-E."/>
        </authorList>
    </citation>
    <scope>NUCLEOTIDE SEQUENCE [MRNA] (ISOFORM 3)</scope>
    <scope>TISSUE SPECIFICITY</scope>
    <scope>SUBCELLULAR LOCATION</scope>
    <scope>INDUCTION</scope>
    <source>
        <strain>C57BL/6J</strain>
    </source>
</reference>
<reference key="2">
    <citation type="journal article" date="2000" name="J. Biol. Chem.">
        <title>Striated muscle preferentially expressed genes alpha and beta are two serine/threonine protein kinases derived from the same gene as the aortic preferentially expressed gene-1.</title>
        <authorList>
            <person name="Hsieh C.-M."/>
            <person name="Fukumoto S."/>
            <person name="Layne M.D."/>
            <person name="Maemura K."/>
            <person name="Charles H."/>
            <person name="Patel A."/>
            <person name="Perrella M.A."/>
            <person name="Lee M.-E."/>
        </authorList>
    </citation>
    <scope>NUCLEOTIDE SEQUENCE [MRNA] (ISOFORMS 1; 2; 3 AND 4)</scope>
    <scope>TISSUE SPECIFICITY</scope>
    <scope>PHOSPHORYLATION</scope>
    <source>
        <strain>BALB/cJ</strain>
    </source>
</reference>
<reference key="3">
    <citation type="journal article" date="2005" name="Science">
        <title>The transcriptional landscape of the mammalian genome.</title>
        <authorList>
            <person name="Carninci P."/>
            <person name="Kasukawa T."/>
            <person name="Katayama S."/>
            <person name="Gough J."/>
            <person name="Frith M.C."/>
            <person name="Maeda N."/>
            <person name="Oyama R."/>
            <person name="Ravasi T."/>
            <person name="Lenhard B."/>
            <person name="Wells C."/>
            <person name="Kodzius R."/>
            <person name="Shimokawa K."/>
            <person name="Bajic V.B."/>
            <person name="Brenner S.E."/>
            <person name="Batalov S."/>
            <person name="Forrest A.R."/>
            <person name="Zavolan M."/>
            <person name="Davis M.J."/>
            <person name="Wilming L.G."/>
            <person name="Aidinis V."/>
            <person name="Allen J.E."/>
            <person name="Ambesi-Impiombato A."/>
            <person name="Apweiler R."/>
            <person name="Aturaliya R.N."/>
            <person name="Bailey T.L."/>
            <person name="Bansal M."/>
            <person name="Baxter L."/>
            <person name="Beisel K.W."/>
            <person name="Bersano T."/>
            <person name="Bono H."/>
            <person name="Chalk A.M."/>
            <person name="Chiu K.P."/>
            <person name="Choudhary V."/>
            <person name="Christoffels A."/>
            <person name="Clutterbuck D.R."/>
            <person name="Crowe M.L."/>
            <person name="Dalla E."/>
            <person name="Dalrymple B.P."/>
            <person name="de Bono B."/>
            <person name="Della Gatta G."/>
            <person name="di Bernardo D."/>
            <person name="Down T."/>
            <person name="Engstrom P."/>
            <person name="Fagiolini M."/>
            <person name="Faulkner G."/>
            <person name="Fletcher C.F."/>
            <person name="Fukushima T."/>
            <person name="Furuno M."/>
            <person name="Futaki S."/>
            <person name="Gariboldi M."/>
            <person name="Georgii-Hemming P."/>
            <person name="Gingeras T.R."/>
            <person name="Gojobori T."/>
            <person name="Green R.E."/>
            <person name="Gustincich S."/>
            <person name="Harbers M."/>
            <person name="Hayashi Y."/>
            <person name="Hensch T.K."/>
            <person name="Hirokawa N."/>
            <person name="Hill D."/>
            <person name="Huminiecki L."/>
            <person name="Iacono M."/>
            <person name="Ikeo K."/>
            <person name="Iwama A."/>
            <person name="Ishikawa T."/>
            <person name="Jakt M."/>
            <person name="Kanapin A."/>
            <person name="Katoh M."/>
            <person name="Kawasawa Y."/>
            <person name="Kelso J."/>
            <person name="Kitamura H."/>
            <person name="Kitano H."/>
            <person name="Kollias G."/>
            <person name="Krishnan S.P."/>
            <person name="Kruger A."/>
            <person name="Kummerfeld S.K."/>
            <person name="Kurochkin I.V."/>
            <person name="Lareau L.F."/>
            <person name="Lazarevic D."/>
            <person name="Lipovich L."/>
            <person name="Liu J."/>
            <person name="Liuni S."/>
            <person name="McWilliam S."/>
            <person name="Madan Babu M."/>
            <person name="Madera M."/>
            <person name="Marchionni L."/>
            <person name="Matsuda H."/>
            <person name="Matsuzawa S."/>
            <person name="Miki H."/>
            <person name="Mignone F."/>
            <person name="Miyake S."/>
            <person name="Morris K."/>
            <person name="Mottagui-Tabar S."/>
            <person name="Mulder N."/>
            <person name="Nakano N."/>
            <person name="Nakauchi H."/>
            <person name="Ng P."/>
            <person name="Nilsson R."/>
            <person name="Nishiguchi S."/>
            <person name="Nishikawa S."/>
            <person name="Nori F."/>
            <person name="Ohara O."/>
            <person name="Okazaki Y."/>
            <person name="Orlando V."/>
            <person name="Pang K.C."/>
            <person name="Pavan W.J."/>
            <person name="Pavesi G."/>
            <person name="Pesole G."/>
            <person name="Petrovsky N."/>
            <person name="Piazza S."/>
            <person name="Reed J."/>
            <person name="Reid J.F."/>
            <person name="Ring B.Z."/>
            <person name="Ringwald M."/>
            <person name="Rost B."/>
            <person name="Ruan Y."/>
            <person name="Salzberg S.L."/>
            <person name="Sandelin A."/>
            <person name="Schneider C."/>
            <person name="Schoenbach C."/>
            <person name="Sekiguchi K."/>
            <person name="Semple C.A."/>
            <person name="Seno S."/>
            <person name="Sessa L."/>
            <person name="Sheng Y."/>
            <person name="Shibata Y."/>
            <person name="Shimada H."/>
            <person name="Shimada K."/>
            <person name="Silva D."/>
            <person name="Sinclair B."/>
            <person name="Sperling S."/>
            <person name="Stupka E."/>
            <person name="Sugiura K."/>
            <person name="Sultana R."/>
            <person name="Takenaka Y."/>
            <person name="Taki K."/>
            <person name="Tammoja K."/>
            <person name="Tan S.L."/>
            <person name="Tang S."/>
            <person name="Taylor M.S."/>
            <person name="Tegner J."/>
            <person name="Teichmann S.A."/>
            <person name="Ueda H.R."/>
            <person name="van Nimwegen E."/>
            <person name="Verardo R."/>
            <person name="Wei C.L."/>
            <person name="Yagi K."/>
            <person name="Yamanishi H."/>
            <person name="Zabarovsky E."/>
            <person name="Zhu S."/>
            <person name="Zimmer A."/>
            <person name="Hide W."/>
            <person name="Bult C."/>
            <person name="Grimmond S.M."/>
            <person name="Teasdale R.D."/>
            <person name="Liu E.T."/>
            <person name="Brusic V."/>
            <person name="Quackenbush J."/>
            <person name="Wahlestedt C."/>
            <person name="Mattick J.S."/>
            <person name="Hume D.A."/>
            <person name="Kai C."/>
            <person name="Sasaki D."/>
            <person name="Tomaru Y."/>
            <person name="Fukuda S."/>
            <person name="Kanamori-Katayama M."/>
            <person name="Suzuki M."/>
            <person name="Aoki J."/>
            <person name="Arakawa T."/>
            <person name="Iida J."/>
            <person name="Imamura K."/>
            <person name="Itoh M."/>
            <person name="Kato T."/>
            <person name="Kawaji H."/>
            <person name="Kawagashira N."/>
            <person name="Kawashima T."/>
            <person name="Kojima M."/>
            <person name="Kondo S."/>
            <person name="Konno H."/>
            <person name="Nakano K."/>
            <person name="Ninomiya N."/>
            <person name="Nishio T."/>
            <person name="Okada M."/>
            <person name="Plessy C."/>
            <person name="Shibata K."/>
            <person name="Shiraki T."/>
            <person name="Suzuki S."/>
            <person name="Tagami M."/>
            <person name="Waki K."/>
            <person name="Watahiki A."/>
            <person name="Okamura-Oho Y."/>
            <person name="Suzuki H."/>
            <person name="Kawai J."/>
            <person name="Hayashizaki Y."/>
        </authorList>
    </citation>
    <scope>NUCLEOTIDE SEQUENCE [LARGE SCALE MRNA] (ISOFORM 2)</scope>
    <source>
        <strain>C57BL/6J</strain>
        <tissue>Spinal ganglion</tissue>
        <tissue>Urinary bladder</tissue>
    </source>
</reference>
<reference key="4">
    <citation type="journal article" date="2004" name="Genome Res.">
        <title>The status, quality, and expansion of the NIH full-length cDNA project: the Mammalian Gene Collection (MGC).</title>
        <authorList>
            <consortium name="The MGC Project Team"/>
        </authorList>
    </citation>
    <scope>NUCLEOTIDE SEQUENCE [LARGE SCALE MRNA] OF 723-3262 (ISOFORM 2)</scope>
    <source>
        <strain>C57BL/6J</strain>
        <tissue>Embryonic brain</tissue>
        <tissue>Limb</tissue>
    </source>
</reference>
<reference key="5">
    <citation type="journal article" date="2003" name="DNA Res.">
        <title>Prediction of the coding sequences of mouse homologues of KIAA gene: II. The complete nucleotide sequences of 400 mouse KIAA-homologous cDNAs identified by screening of terminal sequences of cDNA clones randomly sampled from size-fractionated libraries.</title>
        <authorList>
            <person name="Okazaki N."/>
            <person name="Kikuno R."/>
            <person name="Ohara R."/>
            <person name="Inamoto S."/>
            <person name="Aizawa H."/>
            <person name="Yuasa S."/>
            <person name="Nakajima D."/>
            <person name="Nagase T."/>
            <person name="Ohara O."/>
            <person name="Koga H."/>
        </authorList>
    </citation>
    <scope>NUCLEOTIDE SEQUENCE [MRNA] OF 2092-3262</scope>
    <source>
        <tissue>Brain</tissue>
    </source>
</reference>
<reference key="6">
    <citation type="journal article" date="2006" name="Mol. Cell. Proteomics">
        <title>Comprehensive identification of phosphorylation sites in postsynaptic density preparations.</title>
        <authorList>
            <person name="Trinidad J.C."/>
            <person name="Specht C.G."/>
            <person name="Thalhammer A."/>
            <person name="Schoepfer R."/>
            <person name="Burlingame A.L."/>
        </authorList>
    </citation>
    <scope>PHOSPHORYLATION [LARGE SCALE ANALYSIS] AT SER-1177</scope>
    <scope>IDENTIFICATION BY MASS SPECTROMETRY [LARGE SCALE ANALYSIS]</scope>
    <source>
        <tissue>Brain</tissue>
    </source>
</reference>
<reference key="7">
    <citation type="journal article" date="2009" name="Circulation">
        <title>Disruption of striated preferentially expressed gene locus leads to dilated cardiomyopathy in mice.</title>
        <authorList>
            <person name="Liu X."/>
            <person name="Ramjiganesh T."/>
            <person name="Chen Y.H."/>
            <person name="Chung S.W."/>
            <person name="Hall S.R."/>
            <person name="Schissel S.L."/>
            <person name="Padera R.F. Jr."/>
            <person name="Liao R."/>
            <person name="Ackerman K.G."/>
            <person name="Kajstura J."/>
            <person name="Leri A."/>
            <person name="Anversa P."/>
            <person name="Yet S.F."/>
            <person name="Layne M.D."/>
            <person name="Perrella M.A."/>
        </authorList>
    </citation>
    <scope>TISSUE SPECIFICITY</scope>
    <scope>DISRUPTION PHENOTYPE</scope>
</reference>
<reference key="8">
    <citation type="journal article" date="2010" name="Cell">
        <title>A tissue-specific atlas of mouse protein phosphorylation and expression.</title>
        <authorList>
            <person name="Huttlin E.L."/>
            <person name="Jedrychowski M.P."/>
            <person name="Elias J.E."/>
            <person name="Goswami T."/>
            <person name="Rad R."/>
            <person name="Beausoleil S.A."/>
            <person name="Villen J."/>
            <person name="Haas W."/>
            <person name="Sowa M.E."/>
            <person name="Gygi S.P."/>
        </authorList>
    </citation>
    <scope>PHOSPHORYLATION [LARGE SCALE ANALYSIS] AT SER-375; THR-379; SER-382; THR-453; SER-457; SER-531; SER-1133; SER-1177; SER-1993; SER-2004; SER-2019; SER-2020; SER-2379; THR-2383; SER-2442; SER-2447; SER-2451; SER-2524; SER-2527; THR-2774 AND SER-2944</scope>
    <scope>IDENTIFICATION BY MASS SPECTROMETRY [LARGE SCALE ANALYSIS]</scope>
    <source>
        <tissue>Brain</tissue>
        <tissue>Brown adipose tissue</tissue>
        <tissue>Heart</tissue>
        <tissue>Lung</tissue>
    </source>
</reference>
<reference key="9">
    <citation type="journal article" date="2014" name="Mol. Cell. Proteomics">
        <title>Immunoaffinity enrichment and mass spectrometry analysis of protein methylation.</title>
        <authorList>
            <person name="Guo A."/>
            <person name="Gu H."/>
            <person name="Zhou J."/>
            <person name="Mulhern D."/>
            <person name="Wang Y."/>
            <person name="Lee K.A."/>
            <person name="Yang V."/>
            <person name="Aguiar M."/>
            <person name="Kornhauser J."/>
            <person name="Jia X."/>
            <person name="Ren J."/>
            <person name="Beausoleil S.A."/>
            <person name="Silva J.C."/>
            <person name="Vemulapalli V."/>
            <person name="Bedford M.T."/>
            <person name="Comb M.J."/>
        </authorList>
    </citation>
    <scope>METHYLATION [LARGE SCALE ANALYSIS] AT ARG-33; ARG-2060 AND ARG-2144</scope>
    <scope>IDENTIFICATION BY MASS SPECTROMETRY [LARGE SCALE ANALYSIS]</scope>
    <source>
        <tissue>Brain</tissue>
        <tissue>Embryo</tissue>
    </source>
</reference>
<dbReference type="EC" id="2.7.11.1"/>
<dbReference type="EMBL" id="U57098">
    <property type="protein sequence ID" value="AAC52666.1"/>
    <property type="molecule type" value="mRNA"/>
</dbReference>
<dbReference type="EMBL" id="AF215896">
    <property type="protein sequence ID" value="AAG34791.1"/>
    <property type="status" value="ALT_FRAME"/>
    <property type="molecule type" value="mRNA"/>
</dbReference>
<dbReference type="EMBL" id="AK035543">
    <property type="protein sequence ID" value="BAC29098.1"/>
    <property type="molecule type" value="mRNA"/>
</dbReference>
<dbReference type="EMBL" id="AK164360">
    <property type="protein sequence ID" value="BAE37758.1"/>
    <property type="molecule type" value="mRNA"/>
</dbReference>
<dbReference type="EMBL" id="BC048698">
    <property type="protein sequence ID" value="AAH48698.3"/>
    <property type="molecule type" value="mRNA"/>
</dbReference>
<dbReference type="EMBL" id="BC062643">
    <property type="protein sequence ID" value="AAH62643.1"/>
    <property type="molecule type" value="mRNA"/>
</dbReference>
<dbReference type="EMBL" id="AK122488">
    <property type="protein sequence ID" value="BAC65770.1"/>
    <property type="molecule type" value="mRNA"/>
</dbReference>
<dbReference type="CCDS" id="CCDS35626.1">
    <molecule id="Q62407-1"/>
</dbReference>
<dbReference type="CCDS" id="CCDS48292.1">
    <molecule id="Q62407-2"/>
</dbReference>
<dbReference type="RefSeq" id="NP_001078839.1">
    <property type="nucleotide sequence ID" value="NM_001085370.1"/>
</dbReference>
<dbReference type="RefSeq" id="NP_001078840.1">
    <molecule id="Q62407-2"/>
    <property type="nucleotide sequence ID" value="NM_001085371.2"/>
</dbReference>
<dbReference type="RefSeq" id="NP_001166948.1">
    <property type="nucleotide sequence ID" value="NM_001173477.1"/>
</dbReference>
<dbReference type="SMR" id="Q62407"/>
<dbReference type="BioGRID" id="198144">
    <property type="interactions" value="10"/>
</dbReference>
<dbReference type="FunCoup" id="Q62407">
    <property type="interactions" value="996"/>
</dbReference>
<dbReference type="IntAct" id="Q62407">
    <property type="interactions" value="2"/>
</dbReference>
<dbReference type="STRING" id="10090.ENSMUSP00000084361"/>
<dbReference type="GlyGen" id="Q62407">
    <property type="glycosylation" value="6 sites, 1 O-linked glycan (2 sites)"/>
</dbReference>
<dbReference type="iPTMnet" id="Q62407"/>
<dbReference type="PhosphoSitePlus" id="Q62407"/>
<dbReference type="jPOST" id="Q62407"/>
<dbReference type="PaxDb" id="10090-ENSMUSP00000084361"/>
<dbReference type="PeptideAtlas" id="Q62407"/>
<dbReference type="ProteomicsDB" id="261129">
    <molecule id="Q62407-1"/>
</dbReference>
<dbReference type="ProteomicsDB" id="261130">
    <molecule id="Q62407-2"/>
</dbReference>
<dbReference type="ProteomicsDB" id="261131">
    <molecule id="Q62407-3"/>
</dbReference>
<dbReference type="ProteomicsDB" id="261132">
    <molecule id="Q62407-4"/>
</dbReference>
<dbReference type="Antibodypedia" id="11575">
    <property type="antibodies" value="81 antibodies from 22 providers"/>
</dbReference>
<dbReference type="DNASU" id="11790"/>
<dbReference type="Ensembl" id="ENSMUST00000113590.8">
    <molecule id="Q62407-2"/>
    <property type="protein sequence ID" value="ENSMUSP00000109220.2"/>
    <property type="gene ID" value="ENSMUSG00000026207.17"/>
</dbReference>
<dbReference type="GeneID" id="11790"/>
<dbReference type="KEGG" id="mmu:11790"/>
<dbReference type="UCSC" id="uc007bpa.1">
    <molecule id="Q62407-2"/>
    <property type="organism name" value="mouse"/>
</dbReference>
<dbReference type="AGR" id="MGI:109282"/>
<dbReference type="CTD" id="10290"/>
<dbReference type="MGI" id="MGI:109282">
    <property type="gene designation" value="Speg"/>
</dbReference>
<dbReference type="VEuPathDB" id="HostDB:ENSMUSG00000026207"/>
<dbReference type="eggNOG" id="KOG0032">
    <property type="taxonomic scope" value="Eukaryota"/>
</dbReference>
<dbReference type="eggNOG" id="KOG0613">
    <property type="taxonomic scope" value="Eukaryota"/>
</dbReference>
<dbReference type="GeneTree" id="ENSGT00940000161126"/>
<dbReference type="HOGENOM" id="CLU_332308_0_0_1"/>
<dbReference type="InParanoid" id="Q62407"/>
<dbReference type="OMA" id="TPTWPWP"/>
<dbReference type="OrthoDB" id="2570713at2759"/>
<dbReference type="PhylomeDB" id="Q62407"/>
<dbReference type="BioGRID-ORCS" id="11790">
    <property type="hits" value="4 hits in 77 CRISPR screens"/>
</dbReference>
<dbReference type="CD-CODE" id="CE726F99">
    <property type="entry name" value="Postsynaptic density"/>
</dbReference>
<dbReference type="ChiTaRS" id="Speg">
    <property type="organism name" value="mouse"/>
</dbReference>
<dbReference type="PRO" id="PR:Q62407"/>
<dbReference type="Proteomes" id="UP000000589">
    <property type="component" value="Chromosome 1"/>
</dbReference>
<dbReference type="RNAct" id="Q62407">
    <property type="molecule type" value="protein"/>
</dbReference>
<dbReference type="Bgee" id="ENSMUSG00000026207">
    <property type="expression patterns" value="Expressed in ascending aorta and 246 other cell types or tissues"/>
</dbReference>
<dbReference type="ExpressionAtlas" id="Q62407">
    <property type="expression patterns" value="baseline and differential"/>
</dbReference>
<dbReference type="GO" id="GO:0005634">
    <property type="term" value="C:nucleus"/>
    <property type="evidence" value="ECO:0007669"/>
    <property type="project" value="UniProtKB-SubCell"/>
</dbReference>
<dbReference type="GO" id="GO:0005524">
    <property type="term" value="F:ATP binding"/>
    <property type="evidence" value="ECO:0007669"/>
    <property type="project" value="UniProtKB-KW"/>
</dbReference>
<dbReference type="GO" id="GO:0106310">
    <property type="term" value="F:protein serine kinase activity"/>
    <property type="evidence" value="ECO:0007669"/>
    <property type="project" value="RHEA"/>
</dbReference>
<dbReference type="GO" id="GO:0004674">
    <property type="term" value="F:protein serine/threonine kinase activity"/>
    <property type="evidence" value="ECO:0007669"/>
    <property type="project" value="UniProtKB-KW"/>
</dbReference>
<dbReference type="GO" id="GO:0055013">
    <property type="term" value="P:cardiac muscle cell development"/>
    <property type="evidence" value="ECO:0000315"/>
    <property type="project" value="MGI"/>
</dbReference>
<dbReference type="GO" id="GO:0072359">
    <property type="term" value="P:circulatory system development"/>
    <property type="evidence" value="ECO:0000315"/>
    <property type="project" value="MGI"/>
</dbReference>
<dbReference type="GO" id="GO:0001701">
    <property type="term" value="P:in utero embryonic development"/>
    <property type="evidence" value="ECO:0000315"/>
    <property type="project" value="MGI"/>
</dbReference>
<dbReference type="GO" id="GO:0060541">
    <property type="term" value="P:respiratory system development"/>
    <property type="evidence" value="ECO:0000315"/>
    <property type="project" value="MGI"/>
</dbReference>
<dbReference type="CDD" id="cd00063">
    <property type="entry name" value="FN3"/>
    <property type="match status" value="2"/>
</dbReference>
<dbReference type="CDD" id="cd20975">
    <property type="entry name" value="IgI_APEG-1_like"/>
    <property type="match status" value="1"/>
</dbReference>
<dbReference type="CDD" id="cd14108">
    <property type="entry name" value="STKc_SPEG_rpt1"/>
    <property type="match status" value="1"/>
</dbReference>
<dbReference type="CDD" id="cd14111">
    <property type="entry name" value="STKc_SPEG_rpt2"/>
    <property type="match status" value="1"/>
</dbReference>
<dbReference type="FunFam" id="2.60.40.10:FF:000080">
    <property type="entry name" value="Myosin light chain kinase, smooth muscle"/>
    <property type="match status" value="1"/>
</dbReference>
<dbReference type="FunFam" id="2.60.40.10:FF:000145">
    <property type="entry name" value="Myosin light chain kinase, smooth muscle"/>
    <property type="match status" value="1"/>
</dbReference>
<dbReference type="FunFam" id="1.10.510.10:FF:000363">
    <property type="entry name" value="Striated muscle preferentially expressed protein kinase"/>
    <property type="match status" value="1"/>
</dbReference>
<dbReference type="FunFam" id="2.60.40.10:FF:000497">
    <property type="entry name" value="Striated muscle preferentially expressed protein kinase"/>
    <property type="match status" value="1"/>
</dbReference>
<dbReference type="FunFam" id="2.60.40.10:FF:000538">
    <property type="entry name" value="Striated muscle preferentially expressed protein kinase"/>
    <property type="match status" value="1"/>
</dbReference>
<dbReference type="FunFam" id="2.60.40.10:FF:000784">
    <property type="entry name" value="Striated muscle preferentially expressed protein kinase"/>
    <property type="match status" value="1"/>
</dbReference>
<dbReference type="FunFam" id="2.60.40.10:FF:001056">
    <property type="entry name" value="Striated muscle preferentially expressed protein kinase"/>
    <property type="match status" value="1"/>
</dbReference>
<dbReference type="FunFam" id="2.60.40.10:FF:000428">
    <property type="entry name" value="striated muscle preferentially expressed protein kinase"/>
    <property type="match status" value="1"/>
</dbReference>
<dbReference type="FunFam" id="2.60.40.10:FF:000513">
    <property type="entry name" value="striated muscle preferentially expressed protein kinase"/>
    <property type="match status" value="1"/>
</dbReference>
<dbReference type="FunFam" id="2.60.40.10:FF:000539">
    <property type="entry name" value="striated muscle preferentially expressed protein kinase"/>
    <property type="match status" value="1"/>
</dbReference>
<dbReference type="FunFam" id="2.60.40.10:FF:000541">
    <property type="entry name" value="striated muscle preferentially expressed protein kinase"/>
    <property type="match status" value="1"/>
</dbReference>
<dbReference type="FunFam" id="2.60.40.10:FF:000601">
    <property type="entry name" value="striated muscle preferentially expressed protein kinase"/>
    <property type="match status" value="1"/>
</dbReference>
<dbReference type="FunFam" id="3.30.200.20:FF:000302">
    <property type="entry name" value="striated muscle preferentially expressed protein kinase"/>
    <property type="match status" value="1"/>
</dbReference>
<dbReference type="FunFam" id="3.30.200.20:FF:000312">
    <property type="entry name" value="striated muscle preferentially expressed protein kinase"/>
    <property type="match status" value="1"/>
</dbReference>
<dbReference type="FunFam" id="1.10.510.10:FF:000344">
    <property type="entry name" value="striated muscle preferentially expressed protein kinase isoform X1"/>
    <property type="match status" value="1"/>
</dbReference>
<dbReference type="Gene3D" id="2.60.40.10">
    <property type="entry name" value="Immunoglobulins"/>
    <property type="match status" value="11"/>
</dbReference>
<dbReference type="Gene3D" id="3.30.200.20">
    <property type="entry name" value="Phosphorylase Kinase, domain 1"/>
    <property type="match status" value="2"/>
</dbReference>
<dbReference type="Gene3D" id="1.10.510.10">
    <property type="entry name" value="Transferase(Phosphotransferase) domain 1"/>
    <property type="match status" value="2"/>
</dbReference>
<dbReference type="InterPro" id="IPR003961">
    <property type="entry name" value="FN3_dom"/>
</dbReference>
<dbReference type="InterPro" id="IPR036116">
    <property type="entry name" value="FN3_sf"/>
</dbReference>
<dbReference type="InterPro" id="IPR007110">
    <property type="entry name" value="Ig-like_dom"/>
</dbReference>
<dbReference type="InterPro" id="IPR036179">
    <property type="entry name" value="Ig-like_dom_sf"/>
</dbReference>
<dbReference type="InterPro" id="IPR013783">
    <property type="entry name" value="Ig-like_fold"/>
</dbReference>
<dbReference type="InterPro" id="IPR013098">
    <property type="entry name" value="Ig_I-set"/>
</dbReference>
<dbReference type="InterPro" id="IPR003599">
    <property type="entry name" value="Ig_sub"/>
</dbReference>
<dbReference type="InterPro" id="IPR003598">
    <property type="entry name" value="Ig_sub2"/>
</dbReference>
<dbReference type="InterPro" id="IPR011009">
    <property type="entry name" value="Kinase-like_dom_sf"/>
</dbReference>
<dbReference type="InterPro" id="IPR000719">
    <property type="entry name" value="Prot_kinase_dom"/>
</dbReference>
<dbReference type="InterPro" id="IPR017441">
    <property type="entry name" value="Protein_kinase_ATP_BS"/>
</dbReference>
<dbReference type="InterPro" id="IPR008271">
    <property type="entry name" value="Ser/Thr_kinase_AS"/>
</dbReference>
<dbReference type="PANTHER" id="PTHR47633">
    <property type="entry name" value="IMMUNOGLOBULIN"/>
    <property type="match status" value="1"/>
</dbReference>
<dbReference type="PANTHER" id="PTHR47633:SF3">
    <property type="entry name" value="STRIATED MUSCLE PREFERENTIALLY EXPRESSED PROTEIN KINASE"/>
    <property type="match status" value="1"/>
</dbReference>
<dbReference type="Pfam" id="PF07679">
    <property type="entry name" value="I-set"/>
    <property type="match status" value="8"/>
</dbReference>
<dbReference type="Pfam" id="PF00069">
    <property type="entry name" value="Pkinase"/>
    <property type="match status" value="2"/>
</dbReference>
<dbReference type="Pfam" id="PF16650">
    <property type="entry name" value="SPEG_u2"/>
    <property type="match status" value="1"/>
</dbReference>
<dbReference type="SMART" id="SM00060">
    <property type="entry name" value="FN3"/>
    <property type="match status" value="2"/>
</dbReference>
<dbReference type="SMART" id="SM00409">
    <property type="entry name" value="IG"/>
    <property type="match status" value="9"/>
</dbReference>
<dbReference type="SMART" id="SM00408">
    <property type="entry name" value="IGc2"/>
    <property type="match status" value="8"/>
</dbReference>
<dbReference type="SMART" id="SM00220">
    <property type="entry name" value="S_TKc"/>
    <property type="match status" value="2"/>
</dbReference>
<dbReference type="SUPFAM" id="SSF49265">
    <property type="entry name" value="Fibronectin type III"/>
    <property type="match status" value="1"/>
</dbReference>
<dbReference type="SUPFAM" id="SSF48726">
    <property type="entry name" value="Immunoglobulin"/>
    <property type="match status" value="9"/>
</dbReference>
<dbReference type="SUPFAM" id="SSF56112">
    <property type="entry name" value="Protein kinase-like (PK-like)"/>
    <property type="match status" value="2"/>
</dbReference>
<dbReference type="PROSITE" id="PS50853">
    <property type="entry name" value="FN3"/>
    <property type="match status" value="3"/>
</dbReference>
<dbReference type="PROSITE" id="PS50835">
    <property type="entry name" value="IG_LIKE"/>
    <property type="match status" value="8"/>
</dbReference>
<dbReference type="PROSITE" id="PS00107">
    <property type="entry name" value="PROTEIN_KINASE_ATP"/>
    <property type="match status" value="1"/>
</dbReference>
<dbReference type="PROSITE" id="PS50011">
    <property type="entry name" value="PROTEIN_KINASE_DOM"/>
    <property type="match status" value="2"/>
</dbReference>
<dbReference type="PROSITE" id="PS00108">
    <property type="entry name" value="PROTEIN_KINASE_ST"/>
    <property type="match status" value="2"/>
</dbReference>
<accession>Q62407</accession>
<accession>Q3TPH8</accession>
<accession>Q6P5V1</accession>
<accession>Q80TF7</accession>
<accession>Q80ZN0</accession>
<accession>Q8BZF4</accession>
<accession>Q9EQJ5</accession>
<protein>
    <recommendedName>
        <fullName>Striated muscle-specific serine/threonine-protein kinase</fullName>
        <ecNumber>2.7.11.1</ecNumber>
    </recommendedName>
    <alternativeName>
        <fullName>Aortic preferentially expressed protein 1</fullName>
        <shortName>APEG-1</shortName>
    </alternativeName>
</protein>
<name>SPEG_MOUSE</name>